<reference key="1">
    <citation type="submission" date="2007-11" db="EMBL/GenBank/DDBJ databases">
        <title>Complete sequence of chromosome of Shewanella baltica OS195.</title>
        <authorList>
            <consortium name="US DOE Joint Genome Institute"/>
            <person name="Copeland A."/>
            <person name="Lucas S."/>
            <person name="Lapidus A."/>
            <person name="Barry K."/>
            <person name="Glavina del Rio T."/>
            <person name="Dalin E."/>
            <person name="Tice H."/>
            <person name="Pitluck S."/>
            <person name="Chain P."/>
            <person name="Malfatti S."/>
            <person name="Shin M."/>
            <person name="Vergez L."/>
            <person name="Schmutz J."/>
            <person name="Larimer F."/>
            <person name="Land M."/>
            <person name="Hauser L."/>
            <person name="Kyrpides N."/>
            <person name="Kim E."/>
            <person name="Brettar I."/>
            <person name="Rodrigues J."/>
            <person name="Konstantinidis K."/>
            <person name="Klappenbach J."/>
            <person name="Hofle M."/>
            <person name="Tiedje J."/>
            <person name="Richardson P."/>
        </authorList>
    </citation>
    <scope>NUCLEOTIDE SEQUENCE [LARGE SCALE GENOMIC DNA]</scope>
    <source>
        <strain>OS195</strain>
    </source>
</reference>
<feature type="chain" id="PRO_0000387417" description="tRNA1(Val) (adenine(37)-N6)-methyltransferase">
    <location>
        <begin position="1"/>
        <end position="238"/>
    </location>
</feature>
<evidence type="ECO:0000255" key="1">
    <source>
        <dbReference type="HAMAP-Rule" id="MF_01872"/>
    </source>
</evidence>
<keyword id="KW-0963">Cytoplasm</keyword>
<keyword id="KW-0489">Methyltransferase</keyword>
<keyword id="KW-0949">S-adenosyl-L-methionine</keyword>
<keyword id="KW-0808">Transferase</keyword>
<keyword id="KW-0819">tRNA processing</keyword>
<name>TRMN6_SHEB9</name>
<proteinExistence type="inferred from homology"/>
<accession>A9L1L1</accession>
<gene>
    <name type="ordered locus">Sbal195_3645</name>
</gene>
<protein>
    <recommendedName>
        <fullName evidence="1">tRNA1(Val) (adenine(37)-N6)-methyltransferase</fullName>
        <ecNumber evidence="1">2.1.1.223</ecNumber>
    </recommendedName>
    <alternativeName>
        <fullName evidence="1">tRNA m6A37 methyltransferase</fullName>
    </alternativeName>
</protein>
<dbReference type="EC" id="2.1.1.223" evidence="1"/>
<dbReference type="EMBL" id="CP000891">
    <property type="protein sequence ID" value="ABX50807.1"/>
    <property type="molecule type" value="Genomic_DNA"/>
</dbReference>
<dbReference type="RefSeq" id="WP_006084010.1">
    <property type="nucleotide sequence ID" value="NC_009997.1"/>
</dbReference>
<dbReference type="SMR" id="A9L1L1"/>
<dbReference type="KEGG" id="sbn:Sbal195_3645"/>
<dbReference type="HOGENOM" id="CLU_061983_0_0_6"/>
<dbReference type="Proteomes" id="UP000000770">
    <property type="component" value="Chromosome"/>
</dbReference>
<dbReference type="GO" id="GO:0005737">
    <property type="term" value="C:cytoplasm"/>
    <property type="evidence" value="ECO:0007669"/>
    <property type="project" value="UniProtKB-SubCell"/>
</dbReference>
<dbReference type="GO" id="GO:0003676">
    <property type="term" value="F:nucleic acid binding"/>
    <property type="evidence" value="ECO:0007669"/>
    <property type="project" value="InterPro"/>
</dbReference>
<dbReference type="GO" id="GO:0000179">
    <property type="term" value="F:rRNA (adenine-N6,N6-)-dimethyltransferase activity"/>
    <property type="evidence" value="ECO:0007669"/>
    <property type="project" value="InterPro"/>
</dbReference>
<dbReference type="GO" id="GO:0016430">
    <property type="term" value="F:tRNA (adenine-N6)-methyltransferase activity"/>
    <property type="evidence" value="ECO:0007669"/>
    <property type="project" value="UniProtKB-UniRule"/>
</dbReference>
<dbReference type="GO" id="GO:0008033">
    <property type="term" value="P:tRNA processing"/>
    <property type="evidence" value="ECO:0007669"/>
    <property type="project" value="UniProtKB-UniRule"/>
</dbReference>
<dbReference type="CDD" id="cd02440">
    <property type="entry name" value="AdoMet_MTases"/>
    <property type="match status" value="1"/>
</dbReference>
<dbReference type="Gene3D" id="3.40.50.150">
    <property type="entry name" value="Vaccinia Virus protein VP39"/>
    <property type="match status" value="1"/>
</dbReference>
<dbReference type="HAMAP" id="MF_01872">
    <property type="entry name" value="tRNA_methyltr_YfiC"/>
    <property type="match status" value="1"/>
</dbReference>
<dbReference type="InterPro" id="IPR002052">
    <property type="entry name" value="DNA_methylase_N6_adenine_CS"/>
</dbReference>
<dbReference type="InterPro" id="IPR020596">
    <property type="entry name" value="rRNA_Ade_Mease_Trfase_CS"/>
</dbReference>
<dbReference type="InterPro" id="IPR029063">
    <property type="entry name" value="SAM-dependent_MTases_sf"/>
</dbReference>
<dbReference type="InterPro" id="IPR007848">
    <property type="entry name" value="Small_mtfrase_dom"/>
</dbReference>
<dbReference type="InterPro" id="IPR050210">
    <property type="entry name" value="tRNA_Adenine-N(6)_MTase"/>
</dbReference>
<dbReference type="InterPro" id="IPR022882">
    <property type="entry name" value="tRNA_adenine-N6_MeTrfase"/>
</dbReference>
<dbReference type="PANTHER" id="PTHR47739">
    <property type="entry name" value="TRNA1(VAL) (ADENINE(37)-N6)-METHYLTRANSFERASE"/>
    <property type="match status" value="1"/>
</dbReference>
<dbReference type="PANTHER" id="PTHR47739:SF1">
    <property type="entry name" value="TRNA1(VAL) (ADENINE(37)-N6)-METHYLTRANSFERASE"/>
    <property type="match status" value="1"/>
</dbReference>
<dbReference type="Pfam" id="PF05175">
    <property type="entry name" value="MTS"/>
    <property type="match status" value="1"/>
</dbReference>
<dbReference type="SUPFAM" id="SSF53335">
    <property type="entry name" value="S-adenosyl-L-methionine-dependent methyltransferases"/>
    <property type="match status" value="1"/>
</dbReference>
<dbReference type="PROSITE" id="PS00092">
    <property type="entry name" value="N6_MTASE"/>
    <property type="match status" value="1"/>
</dbReference>
<comment type="function">
    <text evidence="1">Specifically methylates the adenine in position 37 of tRNA(1)(Val) (anticodon cmo5UAC).</text>
</comment>
<comment type="catalytic activity">
    <reaction evidence="1">
        <text>adenosine(37) in tRNA1(Val) + S-adenosyl-L-methionine = N(6)-methyladenosine(37) in tRNA1(Val) + S-adenosyl-L-homocysteine + H(+)</text>
        <dbReference type="Rhea" id="RHEA:43160"/>
        <dbReference type="Rhea" id="RHEA-COMP:10369"/>
        <dbReference type="Rhea" id="RHEA-COMP:10370"/>
        <dbReference type="ChEBI" id="CHEBI:15378"/>
        <dbReference type="ChEBI" id="CHEBI:57856"/>
        <dbReference type="ChEBI" id="CHEBI:59789"/>
        <dbReference type="ChEBI" id="CHEBI:74411"/>
        <dbReference type="ChEBI" id="CHEBI:74449"/>
        <dbReference type="EC" id="2.1.1.223"/>
    </reaction>
</comment>
<comment type="subcellular location">
    <subcellularLocation>
        <location evidence="1">Cytoplasm</location>
    </subcellularLocation>
</comment>
<comment type="similarity">
    <text evidence="1">Belongs to the methyltransferase superfamily. tRNA (adenine-N(6)-)-methyltransferase family.</text>
</comment>
<organism>
    <name type="scientific">Shewanella baltica (strain OS195)</name>
    <dbReference type="NCBI Taxonomy" id="399599"/>
    <lineage>
        <taxon>Bacteria</taxon>
        <taxon>Pseudomonadati</taxon>
        <taxon>Pseudomonadota</taxon>
        <taxon>Gammaproteobacteria</taxon>
        <taxon>Alteromonadales</taxon>
        <taxon>Shewanellaceae</taxon>
        <taxon>Shewanella</taxon>
    </lineage>
</organism>
<sequence>MAFTFKQFHIDDMNCGMAVGTDSVVLGAWAQLTAAKTVLDIGAGSGLLSLMAAQRSQAHITSVELDTSAAEACQHNFHNSPWANRLTLVNSSIQDFCQQIEYQEYFDHIICNPPYFEQGTQAIQSQRAMARHTDSLSFAALLDAIHVCLAPQGNASLILPMQSMARFNEILAHSQLSLIEITNLISIVGKSANRVLCVLAHKTHPQIATKISDITIRELSGQYTQTMVQLIRDFYLKY</sequence>